<reference key="1">
    <citation type="submission" date="2009-06" db="EMBL/GenBank/DDBJ databases">
        <title>Complete sequence of Desulfovibrio salexigens DSM 2638.</title>
        <authorList>
            <consortium name="US DOE Joint Genome Institute"/>
            <person name="Lucas S."/>
            <person name="Copeland A."/>
            <person name="Lapidus A."/>
            <person name="Glavina del Rio T."/>
            <person name="Tice H."/>
            <person name="Bruce D."/>
            <person name="Goodwin L."/>
            <person name="Pitluck S."/>
            <person name="Munk A.C."/>
            <person name="Brettin T."/>
            <person name="Detter J.C."/>
            <person name="Han C."/>
            <person name="Tapia R."/>
            <person name="Larimer F."/>
            <person name="Land M."/>
            <person name="Hauser L."/>
            <person name="Kyrpides N."/>
            <person name="Anderson I."/>
            <person name="Wall J.D."/>
            <person name="Arkin A.P."/>
            <person name="Dehal P."/>
            <person name="Chivian D."/>
            <person name="Giles B."/>
            <person name="Hazen T.C."/>
        </authorList>
    </citation>
    <scope>NUCLEOTIDE SEQUENCE [LARGE SCALE GENOMIC DNA]</scope>
    <source>
        <strain>ATCC 14822 / DSM 2638 / NCIMB 8403 / VKM B-1763</strain>
    </source>
</reference>
<organism>
    <name type="scientific">Maridesulfovibrio salexigens (strain ATCC 14822 / DSM 2638 / NCIMB 8403 / VKM B-1763)</name>
    <name type="common">Desulfovibrio salexigens</name>
    <dbReference type="NCBI Taxonomy" id="526222"/>
    <lineage>
        <taxon>Bacteria</taxon>
        <taxon>Pseudomonadati</taxon>
        <taxon>Thermodesulfobacteriota</taxon>
        <taxon>Desulfovibrionia</taxon>
        <taxon>Desulfovibrionales</taxon>
        <taxon>Desulfovibrionaceae</taxon>
        <taxon>Maridesulfovibrio</taxon>
    </lineage>
</organism>
<gene>
    <name evidence="1" type="primary">katG</name>
    <name type="ordered locus">Desal_1269</name>
</gene>
<sequence length="727" mass="80299">MSDEKKCPVTGRTSSQVAGSGTSNKDWWPNQLNLNILHQHSAKSDPMGKDFNYAEEFKKLDLEALKKDLFELMTDSQDWWPADYGHYGPFFIRMAWHSAGTYRIGDGRGGAGSGSQRLAPLNSWPDNVNLDKARRLLWPIKKKYGRKISWADLMIFAGNCAIESMGLKPFGFAGGREDIWEPEEDIYWGDEDTWLGDTRYSGDRKLDNPLAAVQMGLIYVNPEGPNGDPNAVASGKDVRETFARMAMNDEETVALVAGGHTFGKCHGAGDAANVGPDPEGAPIEQQGLGWKSKFGSGKGGDTISSGIEGAWTPTPIKWDNSYFDTLFGYEWNLEKSPAGAWQWHPSDPEAKKAVPDAHDPSKTHPPMMTTADLSLRMDPIYAPIAKRFHENPEEFADAFARAWFKLTHRDMGPRARYLGSMVPDEELIWQDPVPAVDHELIDNTEIADLKAKILASGLSISKLVSAAWASASTYRDSDKRGGSNGARIRLAPQKDWYVNQPLQLPELLNKLEEIQQHFNSKSGNKKVSLADLIVLGGCAAVEQGAKNAGFDVTVPFTPGRTDASQEQTDVHSFAVLEPAADGFRNYQKVKYSVTPEELLVDKAQLMTLTAPEMTVLIGGMRVLDANFDGSKHGVFTDKPGSLNNDFFSNLLDMDTVWTSTSEDAELFEGRDRESGELKWSATRIDLIFGANSQLRAIAEVYGCEDSGEKFVNDFISAWDKVMNLGIF</sequence>
<keyword id="KW-0349">Heme</keyword>
<keyword id="KW-0376">Hydrogen peroxide</keyword>
<keyword id="KW-0408">Iron</keyword>
<keyword id="KW-0479">Metal-binding</keyword>
<keyword id="KW-0560">Oxidoreductase</keyword>
<keyword id="KW-0575">Peroxidase</keyword>
<keyword id="KW-1185">Reference proteome</keyword>
<dbReference type="EC" id="1.11.1.21" evidence="1"/>
<dbReference type="EMBL" id="CP001649">
    <property type="protein sequence ID" value="ACS79332.1"/>
    <property type="molecule type" value="Genomic_DNA"/>
</dbReference>
<dbReference type="RefSeq" id="WP_015851150.1">
    <property type="nucleotide sequence ID" value="NC_012881.1"/>
</dbReference>
<dbReference type="SMR" id="C6C1T6"/>
<dbReference type="STRING" id="526222.Desal_1269"/>
<dbReference type="KEGG" id="dsa:Desal_1269"/>
<dbReference type="eggNOG" id="COG0376">
    <property type="taxonomic scope" value="Bacteria"/>
</dbReference>
<dbReference type="HOGENOM" id="CLU_025424_2_0_7"/>
<dbReference type="OrthoDB" id="9759743at2"/>
<dbReference type="Proteomes" id="UP000002601">
    <property type="component" value="Chromosome"/>
</dbReference>
<dbReference type="GO" id="GO:0005829">
    <property type="term" value="C:cytosol"/>
    <property type="evidence" value="ECO:0007669"/>
    <property type="project" value="TreeGrafter"/>
</dbReference>
<dbReference type="GO" id="GO:0004096">
    <property type="term" value="F:catalase activity"/>
    <property type="evidence" value="ECO:0007669"/>
    <property type="project" value="UniProtKB-UniRule"/>
</dbReference>
<dbReference type="GO" id="GO:0020037">
    <property type="term" value="F:heme binding"/>
    <property type="evidence" value="ECO:0007669"/>
    <property type="project" value="InterPro"/>
</dbReference>
<dbReference type="GO" id="GO:0046872">
    <property type="term" value="F:metal ion binding"/>
    <property type="evidence" value="ECO:0007669"/>
    <property type="project" value="UniProtKB-KW"/>
</dbReference>
<dbReference type="GO" id="GO:0070301">
    <property type="term" value="P:cellular response to hydrogen peroxide"/>
    <property type="evidence" value="ECO:0007669"/>
    <property type="project" value="TreeGrafter"/>
</dbReference>
<dbReference type="GO" id="GO:0042744">
    <property type="term" value="P:hydrogen peroxide catabolic process"/>
    <property type="evidence" value="ECO:0007669"/>
    <property type="project" value="UniProtKB-KW"/>
</dbReference>
<dbReference type="CDD" id="cd00649">
    <property type="entry name" value="catalase_peroxidase_1"/>
    <property type="match status" value="1"/>
</dbReference>
<dbReference type="CDD" id="cd08200">
    <property type="entry name" value="catalase_peroxidase_2"/>
    <property type="match status" value="1"/>
</dbReference>
<dbReference type="FunFam" id="1.10.420.10:FF:000002">
    <property type="entry name" value="Catalase-peroxidase"/>
    <property type="match status" value="1"/>
</dbReference>
<dbReference type="FunFam" id="1.10.420.10:FF:000004">
    <property type="entry name" value="Catalase-peroxidase"/>
    <property type="match status" value="1"/>
</dbReference>
<dbReference type="FunFam" id="1.10.520.10:FF:000002">
    <property type="entry name" value="Catalase-peroxidase"/>
    <property type="match status" value="1"/>
</dbReference>
<dbReference type="Gene3D" id="1.10.520.10">
    <property type="match status" value="2"/>
</dbReference>
<dbReference type="Gene3D" id="1.10.420.10">
    <property type="entry name" value="Peroxidase, domain 2"/>
    <property type="match status" value="2"/>
</dbReference>
<dbReference type="HAMAP" id="MF_01961">
    <property type="entry name" value="Catal_peroxid"/>
    <property type="match status" value="1"/>
</dbReference>
<dbReference type="InterPro" id="IPR000763">
    <property type="entry name" value="Catalase_peroxidase"/>
</dbReference>
<dbReference type="InterPro" id="IPR002016">
    <property type="entry name" value="Haem_peroxidase"/>
</dbReference>
<dbReference type="InterPro" id="IPR010255">
    <property type="entry name" value="Haem_peroxidase_sf"/>
</dbReference>
<dbReference type="InterPro" id="IPR019794">
    <property type="entry name" value="Peroxidases_AS"/>
</dbReference>
<dbReference type="InterPro" id="IPR019793">
    <property type="entry name" value="Peroxidases_heam-ligand_BS"/>
</dbReference>
<dbReference type="NCBIfam" id="TIGR00198">
    <property type="entry name" value="cat_per_HPI"/>
    <property type="match status" value="1"/>
</dbReference>
<dbReference type="NCBIfam" id="NF011635">
    <property type="entry name" value="PRK15061.1"/>
    <property type="match status" value="1"/>
</dbReference>
<dbReference type="PANTHER" id="PTHR30555:SF0">
    <property type="entry name" value="CATALASE-PEROXIDASE"/>
    <property type="match status" value="1"/>
</dbReference>
<dbReference type="PANTHER" id="PTHR30555">
    <property type="entry name" value="HYDROPEROXIDASE I, BIFUNCTIONAL CATALASE-PEROXIDASE"/>
    <property type="match status" value="1"/>
</dbReference>
<dbReference type="Pfam" id="PF00141">
    <property type="entry name" value="peroxidase"/>
    <property type="match status" value="2"/>
</dbReference>
<dbReference type="PRINTS" id="PR00460">
    <property type="entry name" value="BPEROXIDASE"/>
</dbReference>
<dbReference type="PRINTS" id="PR00458">
    <property type="entry name" value="PEROXIDASE"/>
</dbReference>
<dbReference type="SUPFAM" id="SSF48113">
    <property type="entry name" value="Heme-dependent peroxidases"/>
    <property type="match status" value="2"/>
</dbReference>
<dbReference type="PROSITE" id="PS00435">
    <property type="entry name" value="PEROXIDASE_1"/>
    <property type="match status" value="1"/>
</dbReference>
<dbReference type="PROSITE" id="PS00436">
    <property type="entry name" value="PEROXIDASE_2"/>
    <property type="match status" value="1"/>
</dbReference>
<dbReference type="PROSITE" id="PS50873">
    <property type="entry name" value="PEROXIDASE_4"/>
    <property type="match status" value="1"/>
</dbReference>
<proteinExistence type="inferred from homology"/>
<protein>
    <recommendedName>
        <fullName evidence="1">Catalase-peroxidase</fullName>
        <shortName evidence="1">CP</shortName>
        <ecNumber evidence="1">1.11.1.21</ecNumber>
    </recommendedName>
    <alternativeName>
        <fullName evidence="1">Peroxidase/catalase</fullName>
    </alternativeName>
</protein>
<accession>C6C1T6</accession>
<evidence type="ECO:0000255" key="1">
    <source>
        <dbReference type="HAMAP-Rule" id="MF_01961"/>
    </source>
</evidence>
<evidence type="ECO:0000256" key="2">
    <source>
        <dbReference type="SAM" id="MobiDB-lite"/>
    </source>
</evidence>
<feature type="chain" id="PRO_1000216222" description="Catalase-peroxidase">
    <location>
        <begin position="1"/>
        <end position="727"/>
    </location>
</feature>
<feature type="region of interest" description="Disordered" evidence="2">
    <location>
        <begin position="1"/>
        <end position="26"/>
    </location>
</feature>
<feature type="region of interest" description="Disordered" evidence="2">
    <location>
        <begin position="346"/>
        <end position="365"/>
    </location>
</feature>
<feature type="compositionally biased region" description="Polar residues" evidence="2">
    <location>
        <begin position="11"/>
        <end position="26"/>
    </location>
</feature>
<feature type="compositionally biased region" description="Basic and acidic residues" evidence="2">
    <location>
        <begin position="346"/>
        <end position="362"/>
    </location>
</feature>
<feature type="active site" description="Proton acceptor" evidence="1">
    <location>
        <position position="97"/>
    </location>
</feature>
<feature type="binding site" description="axial binding residue" evidence="1">
    <location>
        <position position="260"/>
    </location>
    <ligand>
        <name>heme b</name>
        <dbReference type="ChEBI" id="CHEBI:60344"/>
    </ligand>
    <ligandPart>
        <name>Fe</name>
        <dbReference type="ChEBI" id="CHEBI:18248"/>
    </ligandPart>
</feature>
<feature type="site" description="Transition state stabilizer" evidence="1">
    <location>
        <position position="93"/>
    </location>
</feature>
<feature type="cross-link" description="Tryptophyl-tyrosyl-methioninium (Trp-Tyr) (with M-245)" evidence="1">
    <location>
        <begin position="96"/>
        <end position="219"/>
    </location>
</feature>
<feature type="cross-link" description="Tryptophyl-tyrosyl-methioninium (Tyr-Met) (with W-96)" evidence="1">
    <location>
        <begin position="219"/>
        <end position="245"/>
    </location>
</feature>
<comment type="function">
    <text evidence="1">Bifunctional enzyme with both catalase and broad-spectrum peroxidase activity.</text>
</comment>
<comment type="catalytic activity">
    <reaction evidence="1">
        <text>H2O2 + AH2 = A + 2 H2O</text>
        <dbReference type="Rhea" id="RHEA:30275"/>
        <dbReference type="ChEBI" id="CHEBI:13193"/>
        <dbReference type="ChEBI" id="CHEBI:15377"/>
        <dbReference type="ChEBI" id="CHEBI:16240"/>
        <dbReference type="ChEBI" id="CHEBI:17499"/>
        <dbReference type="EC" id="1.11.1.21"/>
    </reaction>
</comment>
<comment type="catalytic activity">
    <reaction evidence="1">
        <text>2 H2O2 = O2 + 2 H2O</text>
        <dbReference type="Rhea" id="RHEA:20309"/>
        <dbReference type="ChEBI" id="CHEBI:15377"/>
        <dbReference type="ChEBI" id="CHEBI:15379"/>
        <dbReference type="ChEBI" id="CHEBI:16240"/>
        <dbReference type="EC" id="1.11.1.21"/>
    </reaction>
</comment>
<comment type="cofactor">
    <cofactor evidence="1">
        <name>heme b</name>
        <dbReference type="ChEBI" id="CHEBI:60344"/>
    </cofactor>
    <text evidence="1">Binds 1 heme b (iron(II)-protoporphyrin IX) group per dimer.</text>
</comment>
<comment type="subunit">
    <text evidence="1">Homodimer or homotetramer.</text>
</comment>
<comment type="PTM">
    <text evidence="1">Formation of the three residue Trp-Tyr-Met cross-link is important for the catalase, but not the peroxidase activity of the enzyme.</text>
</comment>
<comment type="similarity">
    <text evidence="1">Belongs to the peroxidase family. Peroxidase/catalase subfamily.</text>
</comment>
<name>KATG_MARSD</name>